<dbReference type="EMBL" id="EU029742">
    <property type="protein sequence ID" value="ABU68542.1"/>
    <property type="molecule type" value="mRNA"/>
</dbReference>
<dbReference type="SMR" id="A7X4K1"/>
<dbReference type="GO" id="GO:0005576">
    <property type="term" value="C:extracellular region"/>
    <property type="evidence" value="ECO:0000250"/>
    <property type="project" value="UniProtKB"/>
</dbReference>
<dbReference type="GO" id="GO:0005615">
    <property type="term" value="C:extracellular space"/>
    <property type="evidence" value="ECO:0007669"/>
    <property type="project" value="TreeGrafter"/>
</dbReference>
<dbReference type="GO" id="GO:0004867">
    <property type="term" value="F:serine-type endopeptidase inhibitor activity"/>
    <property type="evidence" value="ECO:0007669"/>
    <property type="project" value="TreeGrafter"/>
</dbReference>
<dbReference type="GO" id="GO:0019731">
    <property type="term" value="P:antibacterial humoral response"/>
    <property type="evidence" value="ECO:0007669"/>
    <property type="project" value="TreeGrafter"/>
</dbReference>
<dbReference type="GO" id="GO:0045087">
    <property type="term" value="P:innate immune response"/>
    <property type="evidence" value="ECO:0007669"/>
    <property type="project" value="TreeGrafter"/>
</dbReference>
<dbReference type="GO" id="GO:0044278">
    <property type="term" value="P:venom-mediated disruption of cell wall in another organism"/>
    <property type="evidence" value="ECO:0000250"/>
    <property type="project" value="UniProtKB"/>
</dbReference>
<dbReference type="CDD" id="cd00199">
    <property type="entry name" value="WAP"/>
    <property type="match status" value="1"/>
</dbReference>
<dbReference type="FunFam" id="4.10.75.10:FF:000001">
    <property type="entry name" value="Anosmin 1"/>
    <property type="match status" value="2"/>
</dbReference>
<dbReference type="Gene3D" id="4.10.75.10">
    <property type="entry name" value="Elafin-like"/>
    <property type="match status" value="2"/>
</dbReference>
<dbReference type="InterPro" id="IPR036645">
    <property type="entry name" value="Elafin-like_sf"/>
</dbReference>
<dbReference type="InterPro" id="IPR008197">
    <property type="entry name" value="WAP_dom"/>
</dbReference>
<dbReference type="InterPro" id="IPR050514">
    <property type="entry name" value="WAP_four-disulfide_core"/>
</dbReference>
<dbReference type="PANTHER" id="PTHR19441:SF34">
    <property type="entry name" value="WAP FOUR-DISULFIDE CORE DOMAIN PROTEIN 2"/>
    <property type="match status" value="1"/>
</dbReference>
<dbReference type="PANTHER" id="PTHR19441">
    <property type="entry name" value="WHEY ACDIC PROTEIN WAP"/>
    <property type="match status" value="1"/>
</dbReference>
<dbReference type="Pfam" id="PF00095">
    <property type="entry name" value="WAP"/>
    <property type="match status" value="2"/>
</dbReference>
<dbReference type="PRINTS" id="PR00003">
    <property type="entry name" value="4DISULPHCORE"/>
</dbReference>
<dbReference type="SMART" id="SM00217">
    <property type="entry name" value="WAP"/>
    <property type="match status" value="2"/>
</dbReference>
<dbReference type="SUPFAM" id="SSF57256">
    <property type="entry name" value="Elafin-like"/>
    <property type="match status" value="2"/>
</dbReference>
<dbReference type="PROSITE" id="PS51390">
    <property type="entry name" value="WAP"/>
    <property type="match status" value="2"/>
</dbReference>
<protein>
    <recommendedName>
        <fullName evidence="4">Waprin-Phi1</fullName>
    </recommendedName>
</protein>
<name>WAP1_PHIOL</name>
<keyword id="KW-0044">Antibiotic</keyword>
<keyword id="KW-0929">Antimicrobial</keyword>
<keyword id="KW-1015">Disulfide bond</keyword>
<keyword id="KW-0677">Repeat</keyword>
<keyword id="KW-0964">Secreted</keyword>
<keyword id="KW-0732">Signal</keyword>
<feature type="signal peptide" evidence="2">
    <location>
        <begin position="1"/>
        <end position="23"/>
    </location>
</feature>
<feature type="chain" id="PRO_0000314687" description="Waprin-Phi1">
    <location>
        <begin position="24"/>
        <end position="134"/>
    </location>
</feature>
<feature type="domain" description="WAP 1" evidence="3">
    <location>
        <begin position="36"/>
        <end position="82"/>
    </location>
</feature>
<feature type="domain" description="WAP 2" evidence="3">
    <location>
        <begin position="83"/>
        <end position="133"/>
    </location>
</feature>
<feature type="disulfide bond" evidence="3">
    <location>
        <begin position="43"/>
        <end position="72"/>
    </location>
</feature>
<feature type="disulfide bond" evidence="3">
    <location>
        <begin position="55"/>
        <end position="76"/>
    </location>
</feature>
<feature type="disulfide bond" evidence="3">
    <location>
        <begin position="59"/>
        <end position="71"/>
    </location>
</feature>
<feature type="disulfide bond" evidence="3">
    <location>
        <begin position="65"/>
        <end position="80"/>
    </location>
</feature>
<feature type="disulfide bond" evidence="3">
    <location>
        <begin position="90"/>
        <end position="120"/>
    </location>
</feature>
<feature type="disulfide bond" evidence="3">
    <location>
        <begin position="103"/>
        <end position="124"/>
    </location>
</feature>
<feature type="disulfide bond" evidence="3">
    <location>
        <begin position="107"/>
        <end position="119"/>
    </location>
</feature>
<feature type="disulfide bond" evidence="3">
    <location>
        <begin position="113"/>
        <end position="129"/>
    </location>
</feature>
<organism>
    <name type="scientific">Philodryas olfersii</name>
    <name type="common">Green snake</name>
    <dbReference type="NCBI Taxonomy" id="120305"/>
    <lineage>
        <taxon>Eukaryota</taxon>
        <taxon>Metazoa</taxon>
        <taxon>Chordata</taxon>
        <taxon>Craniata</taxon>
        <taxon>Vertebrata</taxon>
        <taxon>Euteleostomi</taxon>
        <taxon>Lepidosauria</taxon>
        <taxon>Squamata</taxon>
        <taxon>Bifurcata</taxon>
        <taxon>Unidentata</taxon>
        <taxon>Episquamata</taxon>
        <taxon>Toxicofera</taxon>
        <taxon>Serpentes</taxon>
        <taxon>Colubroidea</taxon>
        <taxon>Dipsadidae</taxon>
        <taxon>Philodryas</taxon>
    </lineage>
</organism>
<evidence type="ECO:0000250" key="1">
    <source>
        <dbReference type="UniProtKB" id="P83952"/>
    </source>
</evidence>
<evidence type="ECO:0000255" key="2"/>
<evidence type="ECO:0000255" key="3">
    <source>
        <dbReference type="PROSITE-ProRule" id="PRU00722"/>
    </source>
</evidence>
<evidence type="ECO:0000303" key="4">
    <source>
    </source>
</evidence>
<evidence type="ECO:0000305" key="5"/>
<evidence type="ECO:0000305" key="6">
    <source>
    </source>
</evidence>
<sequence>MTLRRGSCPLLLFSLVGLLTTCAQEPDAAGQNTTAVAEKAGTCPQAELEMPDRNCTEACQSDAGCEENKKCCRTGCGTSCQIPDEKPGSCPNVDTPIPPLGLCKTTCSKDSDCSETKKCCKNGCGFMTCTTARP</sequence>
<reference key="1">
    <citation type="journal article" date="2008" name="Mol. Cell. Proteomics">
        <title>Evolution of an arsenal: structural and functional diversification of the venom system in the advanced snakes (Caenophidia).</title>
        <authorList>
            <person name="Fry B.G."/>
            <person name="Scheib H."/>
            <person name="van der Weerd L."/>
            <person name="Young B."/>
            <person name="McNaughtan J."/>
            <person name="Ramjan S.F.R."/>
            <person name="Vidal N."/>
            <person name="Poelmann R.E."/>
            <person name="Norman J.A."/>
        </authorList>
    </citation>
    <scope>NUCLEOTIDE SEQUENCE [MRNA]</scope>
    <source>
        <tissue>Venom gland</tissue>
    </source>
</reference>
<accession>A7X4K1</accession>
<proteinExistence type="evidence at transcript level"/>
<comment type="function">
    <text evidence="1">Damages membranes of susceptible bacteria. Has no hemolytic activity. Not toxic to mice. Does not inhibit the proteinases elastase and cathepsin G.</text>
</comment>
<comment type="subcellular location">
    <subcellularLocation>
        <location evidence="6">Secreted</location>
    </subcellularLocation>
</comment>
<comment type="tissue specificity">
    <text evidence="6">Expressed by the venom gland.</text>
</comment>
<comment type="similarity">
    <text evidence="5">Belongs to the venom waprin family.</text>
</comment>